<gene>
    <name evidence="1" type="primary">rpoA</name>
    <name type="ordered locus">LMHCC_2928</name>
</gene>
<reference key="1">
    <citation type="journal article" date="2011" name="J. Bacteriol.">
        <title>Genome sequence of lineage III Listeria monocytogenes strain HCC23.</title>
        <authorList>
            <person name="Steele C.L."/>
            <person name="Donaldson J.R."/>
            <person name="Paul D."/>
            <person name="Banes M.M."/>
            <person name="Arick T."/>
            <person name="Bridges S.M."/>
            <person name="Lawrence M.L."/>
        </authorList>
    </citation>
    <scope>NUCLEOTIDE SEQUENCE [LARGE SCALE GENOMIC DNA]</scope>
    <source>
        <strain>HCC23</strain>
    </source>
</reference>
<protein>
    <recommendedName>
        <fullName evidence="1">DNA-directed RNA polymerase subunit alpha</fullName>
        <shortName evidence="1">RNAP subunit alpha</shortName>
        <ecNumber evidence="1">2.7.7.6</ecNumber>
    </recommendedName>
    <alternativeName>
        <fullName evidence="1">RNA polymerase subunit alpha</fullName>
    </alternativeName>
    <alternativeName>
        <fullName evidence="1">Transcriptase subunit alpha</fullName>
    </alternativeName>
</protein>
<feature type="chain" id="PRO_1000196638" description="DNA-directed RNA polymerase subunit alpha">
    <location>
        <begin position="1"/>
        <end position="314"/>
    </location>
</feature>
<feature type="region of interest" description="Alpha N-terminal domain (alpha-NTD)" evidence="1">
    <location>
        <begin position="1"/>
        <end position="228"/>
    </location>
</feature>
<feature type="region of interest" description="Alpha C-terminal domain (alpha-CTD)" evidence="1">
    <location>
        <begin position="245"/>
        <end position="314"/>
    </location>
</feature>
<proteinExistence type="inferred from homology"/>
<organism>
    <name type="scientific">Listeria monocytogenes serotype 4a (strain HCC23)</name>
    <dbReference type="NCBI Taxonomy" id="552536"/>
    <lineage>
        <taxon>Bacteria</taxon>
        <taxon>Bacillati</taxon>
        <taxon>Bacillota</taxon>
        <taxon>Bacilli</taxon>
        <taxon>Bacillales</taxon>
        <taxon>Listeriaceae</taxon>
        <taxon>Listeria</taxon>
    </lineage>
</organism>
<sequence length="314" mass="34906">MIEIEKPKIETIEISDDAKYGKFVVEPLERGYGTTLGNSLRRILLSSLPGAAVTSIQIDGALHEFSVIEGVVEDVTTMILNIKKLALKIYSDEEKTLEIDMQGPGVVTAADINYDSDVEILNPDLHIATLSDNAKFHVRLNATRGRGYTPADQNKRENMPIGVLPVDSIFSPVIRVNYQVENTRVGQSTNYDKLTFDVLTDGSISPEEAVSLGAKILSEHLSIFVNLTDEAQKAEIMIEKEESHKEKVLEMTIEELDLSVRSYNCLKRAGINTVQELADKSEDDMMKVRNLGRKSLEEVKVKLADLGLSLRNEN</sequence>
<evidence type="ECO:0000255" key="1">
    <source>
        <dbReference type="HAMAP-Rule" id="MF_00059"/>
    </source>
</evidence>
<comment type="function">
    <text evidence="1">DNA-dependent RNA polymerase catalyzes the transcription of DNA into RNA using the four ribonucleoside triphosphates as substrates.</text>
</comment>
<comment type="catalytic activity">
    <reaction evidence="1">
        <text>RNA(n) + a ribonucleoside 5'-triphosphate = RNA(n+1) + diphosphate</text>
        <dbReference type="Rhea" id="RHEA:21248"/>
        <dbReference type="Rhea" id="RHEA-COMP:14527"/>
        <dbReference type="Rhea" id="RHEA-COMP:17342"/>
        <dbReference type="ChEBI" id="CHEBI:33019"/>
        <dbReference type="ChEBI" id="CHEBI:61557"/>
        <dbReference type="ChEBI" id="CHEBI:140395"/>
        <dbReference type="EC" id="2.7.7.6"/>
    </reaction>
</comment>
<comment type="subunit">
    <text evidence="1">Homodimer. The RNAP catalytic core consists of 2 alpha, 1 beta, 1 beta' and 1 omega subunit. When a sigma factor is associated with the core the holoenzyme is formed, which can initiate transcription.</text>
</comment>
<comment type="domain">
    <text evidence="1">The N-terminal domain is essential for RNAP assembly and basal transcription, whereas the C-terminal domain is involved in interaction with transcriptional regulators and with upstream promoter elements.</text>
</comment>
<comment type="similarity">
    <text evidence="1">Belongs to the RNA polymerase alpha chain family.</text>
</comment>
<accession>B8DB34</accession>
<dbReference type="EC" id="2.7.7.6" evidence="1"/>
<dbReference type="EMBL" id="CP001175">
    <property type="protein sequence ID" value="ACK41259.1"/>
    <property type="molecule type" value="Genomic_DNA"/>
</dbReference>
<dbReference type="RefSeq" id="WP_003723676.1">
    <property type="nucleotide sequence ID" value="NC_011660.1"/>
</dbReference>
<dbReference type="SMR" id="B8DB34"/>
<dbReference type="KEGG" id="lmh:LMHCC_2928"/>
<dbReference type="HOGENOM" id="CLU_053084_0_1_9"/>
<dbReference type="GO" id="GO:0005737">
    <property type="term" value="C:cytoplasm"/>
    <property type="evidence" value="ECO:0007669"/>
    <property type="project" value="UniProtKB-ARBA"/>
</dbReference>
<dbReference type="GO" id="GO:0000428">
    <property type="term" value="C:DNA-directed RNA polymerase complex"/>
    <property type="evidence" value="ECO:0007669"/>
    <property type="project" value="UniProtKB-KW"/>
</dbReference>
<dbReference type="GO" id="GO:0003677">
    <property type="term" value="F:DNA binding"/>
    <property type="evidence" value="ECO:0007669"/>
    <property type="project" value="UniProtKB-UniRule"/>
</dbReference>
<dbReference type="GO" id="GO:0003899">
    <property type="term" value="F:DNA-directed RNA polymerase activity"/>
    <property type="evidence" value="ECO:0007669"/>
    <property type="project" value="UniProtKB-UniRule"/>
</dbReference>
<dbReference type="GO" id="GO:0046983">
    <property type="term" value="F:protein dimerization activity"/>
    <property type="evidence" value="ECO:0007669"/>
    <property type="project" value="InterPro"/>
</dbReference>
<dbReference type="GO" id="GO:0006351">
    <property type="term" value="P:DNA-templated transcription"/>
    <property type="evidence" value="ECO:0007669"/>
    <property type="project" value="UniProtKB-UniRule"/>
</dbReference>
<dbReference type="CDD" id="cd06928">
    <property type="entry name" value="RNAP_alpha_NTD"/>
    <property type="match status" value="1"/>
</dbReference>
<dbReference type="FunFam" id="1.10.150.20:FF:000001">
    <property type="entry name" value="DNA-directed RNA polymerase subunit alpha"/>
    <property type="match status" value="1"/>
</dbReference>
<dbReference type="FunFam" id="2.170.120.12:FF:000001">
    <property type="entry name" value="DNA-directed RNA polymerase subunit alpha"/>
    <property type="match status" value="1"/>
</dbReference>
<dbReference type="Gene3D" id="1.10.150.20">
    <property type="entry name" value="5' to 3' exonuclease, C-terminal subdomain"/>
    <property type="match status" value="1"/>
</dbReference>
<dbReference type="Gene3D" id="2.170.120.12">
    <property type="entry name" value="DNA-directed RNA polymerase, insert domain"/>
    <property type="match status" value="1"/>
</dbReference>
<dbReference type="Gene3D" id="3.30.1360.10">
    <property type="entry name" value="RNA polymerase, RBP11-like subunit"/>
    <property type="match status" value="1"/>
</dbReference>
<dbReference type="HAMAP" id="MF_00059">
    <property type="entry name" value="RNApol_bact_RpoA"/>
    <property type="match status" value="1"/>
</dbReference>
<dbReference type="InterPro" id="IPR011262">
    <property type="entry name" value="DNA-dir_RNA_pol_insert"/>
</dbReference>
<dbReference type="InterPro" id="IPR011263">
    <property type="entry name" value="DNA-dir_RNA_pol_RpoA/D/Rpb3"/>
</dbReference>
<dbReference type="InterPro" id="IPR011773">
    <property type="entry name" value="DNA-dir_RpoA"/>
</dbReference>
<dbReference type="InterPro" id="IPR036603">
    <property type="entry name" value="RBP11-like"/>
</dbReference>
<dbReference type="InterPro" id="IPR011260">
    <property type="entry name" value="RNAP_asu_C"/>
</dbReference>
<dbReference type="InterPro" id="IPR036643">
    <property type="entry name" value="RNApol_insert_sf"/>
</dbReference>
<dbReference type="NCBIfam" id="NF003513">
    <property type="entry name" value="PRK05182.1-2"/>
    <property type="match status" value="1"/>
</dbReference>
<dbReference type="NCBIfam" id="NF003515">
    <property type="entry name" value="PRK05182.2-1"/>
    <property type="match status" value="1"/>
</dbReference>
<dbReference type="NCBIfam" id="NF003519">
    <property type="entry name" value="PRK05182.2-5"/>
    <property type="match status" value="1"/>
</dbReference>
<dbReference type="NCBIfam" id="TIGR02027">
    <property type="entry name" value="rpoA"/>
    <property type="match status" value="1"/>
</dbReference>
<dbReference type="Pfam" id="PF01000">
    <property type="entry name" value="RNA_pol_A_bac"/>
    <property type="match status" value="1"/>
</dbReference>
<dbReference type="Pfam" id="PF03118">
    <property type="entry name" value="RNA_pol_A_CTD"/>
    <property type="match status" value="1"/>
</dbReference>
<dbReference type="Pfam" id="PF01193">
    <property type="entry name" value="RNA_pol_L"/>
    <property type="match status" value="1"/>
</dbReference>
<dbReference type="SMART" id="SM00662">
    <property type="entry name" value="RPOLD"/>
    <property type="match status" value="1"/>
</dbReference>
<dbReference type="SUPFAM" id="SSF47789">
    <property type="entry name" value="C-terminal domain of RNA polymerase alpha subunit"/>
    <property type="match status" value="1"/>
</dbReference>
<dbReference type="SUPFAM" id="SSF56553">
    <property type="entry name" value="Insert subdomain of RNA polymerase alpha subunit"/>
    <property type="match status" value="1"/>
</dbReference>
<dbReference type="SUPFAM" id="SSF55257">
    <property type="entry name" value="RBP11-like subunits of RNA polymerase"/>
    <property type="match status" value="1"/>
</dbReference>
<keyword id="KW-0240">DNA-directed RNA polymerase</keyword>
<keyword id="KW-0548">Nucleotidyltransferase</keyword>
<keyword id="KW-0804">Transcription</keyword>
<keyword id="KW-0808">Transferase</keyword>
<name>RPOA_LISMH</name>